<dbReference type="EC" id="3.6.5.n1" evidence="1"/>
<dbReference type="EMBL" id="AE014292">
    <property type="protein sequence ID" value="AAN34206.1"/>
    <property type="molecule type" value="Genomic_DNA"/>
</dbReference>
<dbReference type="EMBL" id="CP002998">
    <property type="protein sequence ID" value="AEM20483.1"/>
    <property type="molecule type" value="Genomic_DNA"/>
</dbReference>
<dbReference type="RefSeq" id="WP_004687034.1">
    <property type="nucleotide sequence ID" value="NZ_KN046805.1"/>
</dbReference>
<dbReference type="SMR" id="Q8FV17"/>
<dbReference type="GeneID" id="97534913"/>
<dbReference type="KEGG" id="bms:BRA1039"/>
<dbReference type="KEGG" id="bsi:BS1330_II1031"/>
<dbReference type="PATRIC" id="fig|204722.21.peg.1080"/>
<dbReference type="HOGENOM" id="CLU_009995_3_3_5"/>
<dbReference type="PhylomeDB" id="Q8FV17"/>
<dbReference type="Proteomes" id="UP000007104">
    <property type="component" value="Chromosome II"/>
</dbReference>
<dbReference type="GO" id="GO:0005886">
    <property type="term" value="C:plasma membrane"/>
    <property type="evidence" value="ECO:0007669"/>
    <property type="project" value="UniProtKB-SubCell"/>
</dbReference>
<dbReference type="GO" id="GO:0005525">
    <property type="term" value="F:GTP binding"/>
    <property type="evidence" value="ECO:0007669"/>
    <property type="project" value="UniProtKB-UniRule"/>
</dbReference>
<dbReference type="GO" id="GO:0003924">
    <property type="term" value="F:GTPase activity"/>
    <property type="evidence" value="ECO:0007669"/>
    <property type="project" value="UniProtKB-UniRule"/>
</dbReference>
<dbReference type="GO" id="GO:0097216">
    <property type="term" value="F:guanosine tetraphosphate binding"/>
    <property type="evidence" value="ECO:0007669"/>
    <property type="project" value="UniProtKB-ARBA"/>
</dbReference>
<dbReference type="GO" id="GO:0043022">
    <property type="term" value="F:ribosome binding"/>
    <property type="evidence" value="ECO:0007669"/>
    <property type="project" value="UniProtKB-UniRule"/>
</dbReference>
<dbReference type="GO" id="GO:0003746">
    <property type="term" value="F:translation elongation factor activity"/>
    <property type="evidence" value="ECO:0007669"/>
    <property type="project" value="UniProtKB-UniRule"/>
</dbReference>
<dbReference type="GO" id="GO:0045727">
    <property type="term" value="P:positive regulation of translation"/>
    <property type="evidence" value="ECO:0007669"/>
    <property type="project" value="UniProtKB-UniRule"/>
</dbReference>
<dbReference type="CDD" id="cd03699">
    <property type="entry name" value="EF4_II"/>
    <property type="match status" value="1"/>
</dbReference>
<dbReference type="CDD" id="cd16260">
    <property type="entry name" value="EF4_III"/>
    <property type="match status" value="1"/>
</dbReference>
<dbReference type="CDD" id="cd01890">
    <property type="entry name" value="LepA"/>
    <property type="match status" value="1"/>
</dbReference>
<dbReference type="CDD" id="cd03709">
    <property type="entry name" value="lepA_C"/>
    <property type="match status" value="1"/>
</dbReference>
<dbReference type="FunFam" id="3.40.50.300:FF:000078">
    <property type="entry name" value="Elongation factor 4"/>
    <property type="match status" value="1"/>
</dbReference>
<dbReference type="FunFam" id="2.40.30.10:FF:000015">
    <property type="entry name" value="Translation factor GUF1, mitochondrial"/>
    <property type="match status" value="1"/>
</dbReference>
<dbReference type="FunFam" id="3.30.70.240:FF:000007">
    <property type="entry name" value="Translation factor GUF1, mitochondrial"/>
    <property type="match status" value="1"/>
</dbReference>
<dbReference type="FunFam" id="3.30.70.2570:FF:000001">
    <property type="entry name" value="Translation factor GUF1, mitochondrial"/>
    <property type="match status" value="1"/>
</dbReference>
<dbReference type="FunFam" id="3.30.70.870:FF:000004">
    <property type="entry name" value="Translation factor GUF1, mitochondrial"/>
    <property type="match status" value="1"/>
</dbReference>
<dbReference type="Gene3D" id="3.30.70.240">
    <property type="match status" value="1"/>
</dbReference>
<dbReference type="Gene3D" id="3.30.70.2570">
    <property type="entry name" value="Elongation factor 4, C-terminal domain"/>
    <property type="match status" value="1"/>
</dbReference>
<dbReference type="Gene3D" id="3.30.70.870">
    <property type="entry name" value="Elongation Factor G (Translational Gtpase), domain 3"/>
    <property type="match status" value="1"/>
</dbReference>
<dbReference type="Gene3D" id="3.40.50.300">
    <property type="entry name" value="P-loop containing nucleotide triphosphate hydrolases"/>
    <property type="match status" value="1"/>
</dbReference>
<dbReference type="Gene3D" id="2.40.30.10">
    <property type="entry name" value="Translation factors"/>
    <property type="match status" value="1"/>
</dbReference>
<dbReference type="HAMAP" id="MF_00071">
    <property type="entry name" value="LepA"/>
    <property type="match status" value="1"/>
</dbReference>
<dbReference type="InterPro" id="IPR006297">
    <property type="entry name" value="EF-4"/>
</dbReference>
<dbReference type="InterPro" id="IPR035647">
    <property type="entry name" value="EFG_III/V"/>
</dbReference>
<dbReference type="InterPro" id="IPR000640">
    <property type="entry name" value="EFG_V-like"/>
</dbReference>
<dbReference type="InterPro" id="IPR004161">
    <property type="entry name" value="EFTu-like_2"/>
</dbReference>
<dbReference type="InterPro" id="IPR031157">
    <property type="entry name" value="G_TR_CS"/>
</dbReference>
<dbReference type="InterPro" id="IPR038363">
    <property type="entry name" value="LepA_C_sf"/>
</dbReference>
<dbReference type="InterPro" id="IPR013842">
    <property type="entry name" value="LepA_CTD"/>
</dbReference>
<dbReference type="InterPro" id="IPR035654">
    <property type="entry name" value="LepA_IV"/>
</dbReference>
<dbReference type="InterPro" id="IPR027417">
    <property type="entry name" value="P-loop_NTPase"/>
</dbReference>
<dbReference type="InterPro" id="IPR005225">
    <property type="entry name" value="Small_GTP-bd"/>
</dbReference>
<dbReference type="InterPro" id="IPR000795">
    <property type="entry name" value="T_Tr_GTP-bd_dom"/>
</dbReference>
<dbReference type="NCBIfam" id="TIGR01393">
    <property type="entry name" value="lepA"/>
    <property type="match status" value="1"/>
</dbReference>
<dbReference type="NCBIfam" id="TIGR00231">
    <property type="entry name" value="small_GTP"/>
    <property type="match status" value="1"/>
</dbReference>
<dbReference type="PANTHER" id="PTHR43512:SF4">
    <property type="entry name" value="TRANSLATION FACTOR GUF1 HOMOLOG, CHLOROPLASTIC"/>
    <property type="match status" value="1"/>
</dbReference>
<dbReference type="PANTHER" id="PTHR43512">
    <property type="entry name" value="TRANSLATION FACTOR GUF1-RELATED"/>
    <property type="match status" value="1"/>
</dbReference>
<dbReference type="Pfam" id="PF00679">
    <property type="entry name" value="EFG_C"/>
    <property type="match status" value="1"/>
</dbReference>
<dbReference type="Pfam" id="PF00009">
    <property type="entry name" value="GTP_EFTU"/>
    <property type="match status" value="1"/>
</dbReference>
<dbReference type="Pfam" id="PF03144">
    <property type="entry name" value="GTP_EFTU_D2"/>
    <property type="match status" value="1"/>
</dbReference>
<dbReference type="Pfam" id="PF06421">
    <property type="entry name" value="LepA_C"/>
    <property type="match status" value="1"/>
</dbReference>
<dbReference type="PRINTS" id="PR00315">
    <property type="entry name" value="ELONGATNFCT"/>
</dbReference>
<dbReference type="SMART" id="SM00838">
    <property type="entry name" value="EFG_C"/>
    <property type="match status" value="1"/>
</dbReference>
<dbReference type="SUPFAM" id="SSF54980">
    <property type="entry name" value="EF-G C-terminal domain-like"/>
    <property type="match status" value="2"/>
</dbReference>
<dbReference type="SUPFAM" id="SSF52540">
    <property type="entry name" value="P-loop containing nucleoside triphosphate hydrolases"/>
    <property type="match status" value="1"/>
</dbReference>
<dbReference type="PROSITE" id="PS00301">
    <property type="entry name" value="G_TR_1"/>
    <property type="match status" value="1"/>
</dbReference>
<dbReference type="PROSITE" id="PS51722">
    <property type="entry name" value="G_TR_2"/>
    <property type="match status" value="1"/>
</dbReference>
<name>LEPA_BRUSU</name>
<reference key="1">
    <citation type="journal article" date="2002" name="Proc. Natl. Acad. Sci. U.S.A.">
        <title>The Brucella suis genome reveals fundamental similarities between animal and plant pathogens and symbionts.</title>
        <authorList>
            <person name="Paulsen I.T."/>
            <person name="Seshadri R."/>
            <person name="Nelson K.E."/>
            <person name="Eisen J.A."/>
            <person name="Heidelberg J.F."/>
            <person name="Read T.D."/>
            <person name="Dodson R.J."/>
            <person name="Umayam L.A."/>
            <person name="Brinkac L.M."/>
            <person name="Beanan M.J."/>
            <person name="Daugherty S.C."/>
            <person name="DeBoy R.T."/>
            <person name="Durkin A.S."/>
            <person name="Kolonay J.F."/>
            <person name="Madupu R."/>
            <person name="Nelson W.C."/>
            <person name="Ayodeji B."/>
            <person name="Kraul M."/>
            <person name="Shetty J."/>
            <person name="Malek J.A."/>
            <person name="Van Aken S.E."/>
            <person name="Riedmuller S."/>
            <person name="Tettelin H."/>
            <person name="Gill S.R."/>
            <person name="White O."/>
            <person name="Salzberg S.L."/>
            <person name="Hoover D.L."/>
            <person name="Lindler L.E."/>
            <person name="Halling S.M."/>
            <person name="Boyle S.M."/>
            <person name="Fraser C.M."/>
        </authorList>
    </citation>
    <scope>NUCLEOTIDE SEQUENCE [LARGE SCALE GENOMIC DNA]</scope>
    <source>
        <strain>1330</strain>
    </source>
</reference>
<reference key="2">
    <citation type="journal article" date="2011" name="J. Bacteriol.">
        <title>Revised genome sequence of Brucella suis 1330.</title>
        <authorList>
            <person name="Tae H."/>
            <person name="Shallom S."/>
            <person name="Settlage R."/>
            <person name="Preston D."/>
            <person name="Adams L.G."/>
            <person name="Garner H.R."/>
        </authorList>
    </citation>
    <scope>NUCLEOTIDE SEQUENCE [LARGE SCALE GENOMIC DNA]</scope>
    <source>
        <strain>1330</strain>
    </source>
</reference>
<keyword id="KW-0997">Cell inner membrane</keyword>
<keyword id="KW-1003">Cell membrane</keyword>
<keyword id="KW-0342">GTP-binding</keyword>
<keyword id="KW-0378">Hydrolase</keyword>
<keyword id="KW-0472">Membrane</keyword>
<keyword id="KW-0547">Nucleotide-binding</keyword>
<keyword id="KW-0648">Protein biosynthesis</keyword>
<sequence length="602" mass="66895">MSTPLDHIRNFSIVAHIDHGKSTLADRLIQLTGGLDTREMKDQVLDSMDIERERGITIKAQTVRLSYKAKNGEDYVLNLIDTPGHVDFAYEVSRSLAACEGSLLVVDASQGVEAQTLANVYQAIDNNHEIVVVLNKIDLPAAEPERVKQQIEEVIGIDASDAVEISAKTGLGIEDVLEAIVNKLPAPKEGDRNAPLKAMLVDSWYDSYLGVIVLVRVIDGVLKKGQTIRMMGTGAKYPVERTGVFTPKMVQVDDLGPGELGFITASIKEVADTRVGDTITEDRRPTENMLSGFKPAQPVVFCGLFPVDAADFEDLRGAMGKLRLNDASFSFEMETSAALGFGFRCGFLGLLHLEIIQERLEREFNLDLITTAPSVVYRLNMTDGTHKELHNPADMPDVVKIASIEEPWIKATIMTPDDYLGAIMKLCQERRGIQIDLTYVGPRAMITYDLPLNEVVFDFYDRLKSISKGYASFDYNLSDYREGDLVKMSILVNEEPVDALSMLVHRSAAEKRGRALCEKLKELIPQHMFKIPIQAAIGGRIVARETISALRKDVTAKCYGGDVTRKRKLLEKQKEGKKRMRQFGKVEIPQEAFIQALKMGDD</sequence>
<gene>
    <name evidence="1" type="primary">lepA</name>
    <name type="ordered locus">BRA1039</name>
    <name type="ordered locus">BS1330_II1031</name>
</gene>
<evidence type="ECO:0000255" key="1">
    <source>
        <dbReference type="HAMAP-Rule" id="MF_00071"/>
    </source>
</evidence>
<proteinExistence type="inferred from homology"/>
<comment type="function">
    <text evidence="1">Required for accurate and efficient protein synthesis under certain stress conditions. May act as a fidelity factor of the translation reaction, by catalyzing a one-codon backward translocation of tRNAs on improperly translocated ribosomes. Back-translocation proceeds from a post-translocation (POST) complex to a pre-translocation (PRE) complex, thus giving elongation factor G a second chance to translocate the tRNAs correctly. Binds to ribosomes in a GTP-dependent manner.</text>
</comment>
<comment type="catalytic activity">
    <reaction evidence="1">
        <text>GTP + H2O = GDP + phosphate + H(+)</text>
        <dbReference type="Rhea" id="RHEA:19669"/>
        <dbReference type="ChEBI" id="CHEBI:15377"/>
        <dbReference type="ChEBI" id="CHEBI:15378"/>
        <dbReference type="ChEBI" id="CHEBI:37565"/>
        <dbReference type="ChEBI" id="CHEBI:43474"/>
        <dbReference type="ChEBI" id="CHEBI:58189"/>
        <dbReference type="EC" id="3.6.5.n1"/>
    </reaction>
</comment>
<comment type="subcellular location">
    <subcellularLocation>
        <location evidence="1">Cell inner membrane</location>
        <topology evidence="1">Peripheral membrane protein</topology>
        <orientation evidence="1">Cytoplasmic side</orientation>
    </subcellularLocation>
</comment>
<comment type="similarity">
    <text evidence="1">Belongs to the TRAFAC class translation factor GTPase superfamily. Classic translation factor GTPase family. LepA subfamily.</text>
</comment>
<organism>
    <name type="scientific">Brucella suis biovar 1 (strain 1330)</name>
    <dbReference type="NCBI Taxonomy" id="204722"/>
    <lineage>
        <taxon>Bacteria</taxon>
        <taxon>Pseudomonadati</taxon>
        <taxon>Pseudomonadota</taxon>
        <taxon>Alphaproteobacteria</taxon>
        <taxon>Hyphomicrobiales</taxon>
        <taxon>Brucellaceae</taxon>
        <taxon>Brucella/Ochrobactrum group</taxon>
        <taxon>Brucella</taxon>
    </lineage>
</organism>
<accession>Q8FV17</accession>
<accession>G0KE45</accession>
<feature type="chain" id="PRO_0000176245" description="Elongation factor 4">
    <location>
        <begin position="1"/>
        <end position="602"/>
    </location>
</feature>
<feature type="domain" description="tr-type G">
    <location>
        <begin position="6"/>
        <end position="188"/>
    </location>
</feature>
<feature type="binding site" evidence="1">
    <location>
        <begin position="18"/>
        <end position="23"/>
    </location>
    <ligand>
        <name>GTP</name>
        <dbReference type="ChEBI" id="CHEBI:37565"/>
    </ligand>
</feature>
<feature type="binding site" evidence="1">
    <location>
        <begin position="135"/>
        <end position="138"/>
    </location>
    <ligand>
        <name>GTP</name>
        <dbReference type="ChEBI" id="CHEBI:37565"/>
    </ligand>
</feature>
<protein>
    <recommendedName>
        <fullName evidence="1">Elongation factor 4</fullName>
        <shortName evidence="1">EF-4</shortName>
        <ecNumber evidence="1">3.6.5.n1</ecNumber>
    </recommendedName>
    <alternativeName>
        <fullName evidence="1">Ribosomal back-translocase LepA</fullName>
    </alternativeName>
</protein>